<dbReference type="EC" id="2.7.7.6" evidence="1"/>
<dbReference type="EMBL" id="AE000516">
    <property type="protein sequence ID" value="AAK44921.1"/>
    <property type="molecule type" value="Genomic_DNA"/>
</dbReference>
<dbReference type="PIR" id="F70535">
    <property type="entry name" value="F70535"/>
</dbReference>
<dbReference type="EMDB" id="EMD-14696"/>
<dbReference type="EMDB" id="EMD-14697"/>
<dbReference type="SMR" id="P9WGY8"/>
<dbReference type="KEGG" id="mtc:MT0695"/>
<dbReference type="HOGENOM" id="CLU_000524_4_1_11"/>
<dbReference type="Proteomes" id="UP000001020">
    <property type="component" value="Chromosome"/>
</dbReference>
<dbReference type="GO" id="GO:0000428">
    <property type="term" value="C:DNA-directed RNA polymerase complex"/>
    <property type="evidence" value="ECO:0007669"/>
    <property type="project" value="UniProtKB-KW"/>
</dbReference>
<dbReference type="GO" id="GO:0003677">
    <property type="term" value="F:DNA binding"/>
    <property type="evidence" value="ECO:0007669"/>
    <property type="project" value="UniProtKB-UniRule"/>
</dbReference>
<dbReference type="GO" id="GO:0003899">
    <property type="term" value="F:DNA-directed RNA polymerase activity"/>
    <property type="evidence" value="ECO:0007669"/>
    <property type="project" value="UniProtKB-UniRule"/>
</dbReference>
<dbReference type="GO" id="GO:0032549">
    <property type="term" value="F:ribonucleoside binding"/>
    <property type="evidence" value="ECO:0007669"/>
    <property type="project" value="InterPro"/>
</dbReference>
<dbReference type="GO" id="GO:0006351">
    <property type="term" value="P:DNA-templated transcription"/>
    <property type="evidence" value="ECO:0007669"/>
    <property type="project" value="UniProtKB-UniRule"/>
</dbReference>
<dbReference type="GO" id="GO:0046677">
    <property type="term" value="P:response to antibiotic"/>
    <property type="evidence" value="ECO:0007669"/>
    <property type="project" value="UniProtKB-KW"/>
</dbReference>
<dbReference type="CDD" id="cd00653">
    <property type="entry name" value="RNA_pol_B_RPB2"/>
    <property type="match status" value="1"/>
</dbReference>
<dbReference type="FunFam" id="3.90.1800.10:FF:000005">
    <property type="entry name" value="DNA-directed RNA polymerase subunit beta"/>
    <property type="match status" value="1"/>
</dbReference>
<dbReference type="Gene3D" id="2.40.50.100">
    <property type="match status" value="1"/>
</dbReference>
<dbReference type="Gene3D" id="2.40.50.150">
    <property type="match status" value="1"/>
</dbReference>
<dbReference type="Gene3D" id="3.90.1100.10">
    <property type="match status" value="1"/>
</dbReference>
<dbReference type="Gene3D" id="2.30.150.10">
    <property type="entry name" value="DNA-directed RNA polymerase, beta subunit, external 1 domain"/>
    <property type="match status" value="1"/>
</dbReference>
<dbReference type="Gene3D" id="2.40.270.10">
    <property type="entry name" value="DNA-directed RNA polymerase, subunit 2, domain 6"/>
    <property type="match status" value="1"/>
</dbReference>
<dbReference type="Gene3D" id="3.90.1800.10">
    <property type="entry name" value="RNA polymerase alpha subunit dimerisation domain"/>
    <property type="match status" value="1"/>
</dbReference>
<dbReference type="Gene3D" id="3.90.1110.10">
    <property type="entry name" value="RNA polymerase Rpb2, domain 2"/>
    <property type="match status" value="1"/>
</dbReference>
<dbReference type="HAMAP" id="MF_01321">
    <property type="entry name" value="RNApol_bact_RpoB"/>
    <property type="match status" value="1"/>
</dbReference>
<dbReference type="InterPro" id="IPR042107">
    <property type="entry name" value="DNA-dir_RNA_pol_bsu_ext_1_sf"/>
</dbReference>
<dbReference type="InterPro" id="IPR019462">
    <property type="entry name" value="DNA-dir_RNA_pol_bsu_external_1"/>
</dbReference>
<dbReference type="InterPro" id="IPR015712">
    <property type="entry name" value="DNA-dir_RNA_pol_su2"/>
</dbReference>
<dbReference type="InterPro" id="IPR007120">
    <property type="entry name" value="DNA-dir_RNAP_su2_dom"/>
</dbReference>
<dbReference type="InterPro" id="IPR037033">
    <property type="entry name" value="DNA-dir_RNAP_su2_hyb_sf"/>
</dbReference>
<dbReference type="InterPro" id="IPR010243">
    <property type="entry name" value="RNA_pol_bsu_bac"/>
</dbReference>
<dbReference type="InterPro" id="IPR007121">
    <property type="entry name" value="RNA_pol_bsu_CS"/>
</dbReference>
<dbReference type="InterPro" id="IPR007644">
    <property type="entry name" value="RNA_pol_bsu_protrusion"/>
</dbReference>
<dbReference type="InterPro" id="IPR007642">
    <property type="entry name" value="RNA_pol_Rpb2_2"/>
</dbReference>
<dbReference type="InterPro" id="IPR037034">
    <property type="entry name" value="RNA_pol_Rpb2_2_sf"/>
</dbReference>
<dbReference type="InterPro" id="IPR007645">
    <property type="entry name" value="RNA_pol_Rpb2_3"/>
</dbReference>
<dbReference type="InterPro" id="IPR007641">
    <property type="entry name" value="RNA_pol_Rpb2_7"/>
</dbReference>
<dbReference type="InterPro" id="IPR014724">
    <property type="entry name" value="RNA_pol_RPB2_OB-fold"/>
</dbReference>
<dbReference type="NCBIfam" id="NF001616">
    <property type="entry name" value="PRK00405.1"/>
    <property type="match status" value="1"/>
</dbReference>
<dbReference type="NCBIfam" id="TIGR02013">
    <property type="entry name" value="rpoB"/>
    <property type="match status" value="1"/>
</dbReference>
<dbReference type="PANTHER" id="PTHR20856">
    <property type="entry name" value="DNA-DIRECTED RNA POLYMERASE I SUBUNIT 2"/>
    <property type="match status" value="1"/>
</dbReference>
<dbReference type="Pfam" id="PF04563">
    <property type="entry name" value="RNA_pol_Rpb2_1"/>
    <property type="match status" value="1"/>
</dbReference>
<dbReference type="Pfam" id="PF04561">
    <property type="entry name" value="RNA_pol_Rpb2_2"/>
    <property type="match status" value="1"/>
</dbReference>
<dbReference type="Pfam" id="PF04565">
    <property type="entry name" value="RNA_pol_Rpb2_3"/>
    <property type="match status" value="1"/>
</dbReference>
<dbReference type="Pfam" id="PF10385">
    <property type="entry name" value="RNA_pol_Rpb2_45"/>
    <property type="match status" value="1"/>
</dbReference>
<dbReference type="Pfam" id="PF00562">
    <property type="entry name" value="RNA_pol_Rpb2_6"/>
    <property type="match status" value="1"/>
</dbReference>
<dbReference type="Pfam" id="PF04560">
    <property type="entry name" value="RNA_pol_Rpb2_7"/>
    <property type="match status" value="1"/>
</dbReference>
<dbReference type="SUPFAM" id="SSF64484">
    <property type="entry name" value="beta and beta-prime subunits of DNA dependent RNA-polymerase"/>
    <property type="match status" value="1"/>
</dbReference>
<dbReference type="PROSITE" id="PS01166">
    <property type="entry name" value="RNA_POL_BETA"/>
    <property type="match status" value="1"/>
</dbReference>
<keyword id="KW-0046">Antibiotic resistance</keyword>
<keyword id="KW-0240">DNA-directed RNA polymerase</keyword>
<keyword id="KW-0548">Nucleotidyltransferase</keyword>
<keyword id="KW-1185">Reference proteome</keyword>
<keyword id="KW-0804">Transcription</keyword>
<keyword id="KW-0808">Transferase</keyword>
<name>RPOB_MYCTO</name>
<proteinExistence type="inferred from homology"/>
<gene>
    <name evidence="1" type="primary">rpoB</name>
    <name type="ordered locus">MT0695</name>
</gene>
<sequence length="1178" mass="129865">MLEGCILADSRQSKTAASPSPSRPQSSSNNSVPGAPNRVSFAKLREPLEVPGLLDVQTDSFEWLIGSPRWRESAAERGDVNPVGGLEEVLYELSPIEDFSGSMSLSFSDPRFDDVKAPVDECKDKDMTYAAPLFVTAEFINNNTGEIKSQTVFMGDFPMMTEKGTFIINGTERVVVSQLVRSPGVYFDETIDKSTDKTLHSVKVIPSRGAWLEFDVDKRDTVGVRIDRKRRQPVTVLLKALGWTSEQIVERFGFSEIMRSTLEKDNTVGTDEALLDIYRKLRPGEPPTKESAQTLLENLFFKEKRYDLARVGRYKVNKKLGLHVGEPITSSTLTEEDVVATIEYLVRLHEGQTTMTVPGGVEVPVETDDIDHFGNRRLRTVGELIQNQIRVGMSRMERVVRERMTTQDVEAITPQTLINIRPVVAAIKEFFGTSQLSQFMDQNNPLSGLTHKRRLSALGPGGLSRERAGLEVRDVHPSHYGRMCPIETPEGPNIGLIGSLSVYARVNPFGFIETPYRKVVDGVVSDEIVYLTADEEDRHVVAQANSPIDADGRFVEPRVLVRRKAGEVEYVPSSEVDYMDVSPRQMVSVATAMIPFLEHDDANRALMGANMQRQAVPLVRSEAPLVGTGMELRAAIDAGDVVVAEESGVIEEVSADYITVMHDNGTRRTYRMRKFARSNHGTCANQCPIVDAGDRVEAGQVIADGPCTDDGEMALGKNLLVAIMPWEGHNYEDAIILSNRLVEEDVLTSIHIEEHEIDARDTKLGAEEITRDIPNISDEVLADLDERGIVRIGAEVRDGDILVGKVTPKGETELTPEERLLRAIFGEKAREVRDTSLKVPHGESGKVIGIRVFSREDEDELPAGVNELVRVYVAQKRKISDGDKLAGRHGNKGVIGKILPVEDMPFLADGTPVDIILNTHGVPRRMNIGQILETHLGWCAHSGWKVDAAKGVPDWAARLPDELLEAQPNAIVSTPVFDGAQEAELQGLLSCTLPNRDGDVLVDADGKAMLFDGRSGEPFPYPVTVGYMYIMKLHHLVDDKIHARSTGPYSMITQQPLGGKAQFGGQRFGEMECWAMQAYGAAYTLQELLTIKSDDTVGRVKVYEAIVKGENIPEPGIPESFKVLLKELQSLCLNVEVLSSDGAAIELREGEDEDLERAAANLGINLSRNESASVEDLA</sequence>
<organism>
    <name type="scientific">Mycobacterium tuberculosis (strain CDC 1551 / Oshkosh)</name>
    <dbReference type="NCBI Taxonomy" id="83331"/>
    <lineage>
        <taxon>Bacteria</taxon>
        <taxon>Bacillati</taxon>
        <taxon>Actinomycetota</taxon>
        <taxon>Actinomycetes</taxon>
        <taxon>Mycobacteriales</taxon>
        <taxon>Mycobacteriaceae</taxon>
        <taxon>Mycobacterium</taxon>
        <taxon>Mycobacterium tuberculosis complex</taxon>
    </lineage>
</organism>
<comment type="function">
    <text evidence="1">DNA-dependent RNA polymerase catalyzes the transcription of DNA into RNA using the four ribonucleoside triphosphates as substrates.</text>
</comment>
<comment type="catalytic activity">
    <reaction evidence="1">
        <text>RNA(n) + a ribonucleoside 5'-triphosphate = RNA(n+1) + diphosphate</text>
        <dbReference type="Rhea" id="RHEA:21248"/>
        <dbReference type="Rhea" id="RHEA-COMP:14527"/>
        <dbReference type="Rhea" id="RHEA-COMP:17342"/>
        <dbReference type="ChEBI" id="CHEBI:33019"/>
        <dbReference type="ChEBI" id="CHEBI:61557"/>
        <dbReference type="ChEBI" id="CHEBI:140395"/>
        <dbReference type="EC" id="2.7.7.6"/>
    </reaction>
</comment>
<comment type="subunit">
    <text evidence="1">The RNAP catalytic core consists of 2 alpha, 1 beta, 1 beta' and 1 omega subunit. When a sigma factor is associated with the core the holoenzyme is formed, which can initiate transcription.</text>
</comment>
<comment type="similarity">
    <text evidence="1">Belongs to the RNA polymerase beta chain family.</text>
</comment>
<protein>
    <recommendedName>
        <fullName evidence="1">DNA-directed RNA polymerase subunit beta</fullName>
        <shortName evidence="1">RNAP subunit beta</shortName>
        <ecNumber evidence="1">2.7.7.6</ecNumber>
    </recommendedName>
    <alternativeName>
        <fullName evidence="1">RNA polymerase subunit beta</fullName>
    </alternativeName>
    <alternativeName>
        <fullName evidence="1">Transcriptase subunit beta</fullName>
    </alternativeName>
</protein>
<feature type="chain" id="PRO_0000428279" description="DNA-directed RNA polymerase subunit beta">
    <location>
        <begin position="1"/>
        <end position="1178"/>
    </location>
</feature>
<feature type="region of interest" description="Disordered" evidence="2">
    <location>
        <begin position="1"/>
        <end position="37"/>
    </location>
</feature>
<feature type="compositionally biased region" description="Low complexity" evidence="2">
    <location>
        <begin position="18"/>
        <end position="33"/>
    </location>
</feature>
<reference key="1">
    <citation type="journal article" date="2002" name="J. Bacteriol.">
        <title>Whole-genome comparison of Mycobacterium tuberculosis clinical and laboratory strains.</title>
        <authorList>
            <person name="Fleischmann R.D."/>
            <person name="Alland D."/>
            <person name="Eisen J.A."/>
            <person name="Carpenter L."/>
            <person name="White O."/>
            <person name="Peterson J.D."/>
            <person name="DeBoy R.T."/>
            <person name="Dodson R.J."/>
            <person name="Gwinn M.L."/>
            <person name="Haft D.H."/>
            <person name="Hickey E.K."/>
            <person name="Kolonay J.F."/>
            <person name="Nelson W.C."/>
            <person name="Umayam L.A."/>
            <person name="Ermolaeva M.D."/>
            <person name="Salzberg S.L."/>
            <person name="Delcher A."/>
            <person name="Utterback T.R."/>
            <person name="Weidman J.F."/>
            <person name="Khouri H.M."/>
            <person name="Gill J."/>
            <person name="Mikula A."/>
            <person name="Bishai W."/>
            <person name="Jacobs W.R. Jr."/>
            <person name="Venter J.C."/>
            <person name="Fraser C.M."/>
        </authorList>
    </citation>
    <scope>NUCLEOTIDE SEQUENCE [LARGE SCALE GENOMIC DNA]</scope>
    <source>
        <strain>CDC 1551 / Oshkosh</strain>
    </source>
</reference>
<evidence type="ECO:0000255" key="1">
    <source>
        <dbReference type="HAMAP-Rule" id="MF_01321"/>
    </source>
</evidence>
<evidence type="ECO:0000256" key="2">
    <source>
        <dbReference type="SAM" id="MobiDB-lite"/>
    </source>
</evidence>
<accession>P9WGY8</accession>
<accession>L0T4D5</accession>
<accession>O08406</accession>
<accession>P0A680</accession>
<accession>P47766</accession>
<accession>Q53424</accession>
<accession>Q59564</accession>
<accession>Q9X6Q3</accession>
<accession>Q9X6U9</accession>
<accession>Q9XC82</accession>
<accession>Q9XC83</accession>
<accession>Q9XC84</accession>
<accession>Q9XC85</accession>